<feature type="chain" id="PRO_1000051693" description="Large ribosomal subunit protein eL39">
    <location>
        <begin position="1"/>
        <end position="51"/>
    </location>
</feature>
<feature type="region of interest" description="Disordered" evidence="2">
    <location>
        <begin position="32"/>
        <end position="51"/>
    </location>
</feature>
<protein>
    <recommendedName>
        <fullName evidence="1">Large ribosomal subunit protein eL39</fullName>
    </recommendedName>
    <alternativeName>
        <fullName evidence="3">50S ribosomal protein L39e</fullName>
    </alternativeName>
</protein>
<name>RL39_PYRAR</name>
<organism>
    <name type="scientific">Pyrobaculum arsenaticum (strain DSM 13514 / JCM 11321 / PZ6)</name>
    <dbReference type="NCBI Taxonomy" id="340102"/>
    <lineage>
        <taxon>Archaea</taxon>
        <taxon>Thermoproteota</taxon>
        <taxon>Thermoprotei</taxon>
        <taxon>Thermoproteales</taxon>
        <taxon>Thermoproteaceae</taxon>
        <taxon>Pyrobaculum</taxon>
    </lineage>
</organism>
<accession>A4WLS6</accession>
<dbReference type="EMBL" id="CP000660">
    <property type="protein sequence ID" value="ABP51343.1"/>
    <property type="molecule type" value="Genomic_DNA"/>
</dbReference>
<dbReference type="SMR" id="A4WLS6"/>
<dbReference type="STRING" id="340102.Pars_1792"/>
<dbReference type="KEGG" id="pas:Pars_1792"/>
<dbReference type="HOGENOM" id="CLU_181948_4_0_2"/>
<dbReference type="OrthoDB" id="65887at2157"/>
<dbReference type="PhylomeDB" id="A4WLS6"/>
<dbReference type="Proteomes" id="UP000001567">
    <property type="component" value="Chromosome"/>
</dbReference>
<dbReference type="GO" id="GO:1990904">
    <property type="term" value="C:ribonucleoprotein complex"/>
    <property type="evidence" value="ECO:0007669"/>
    <property type="project" value="UniProtKB-KW"/>
</dbReference>
<dbReference type="GO" id="GO:0005840">
    <property type="term" value="C:ribosome"/>
    <property type="evidence" value="ECO:0007669"/>
    <property type="project" value="UniProtKB-KW"/>
</dbReference>
<dbReference type="GO" id="GO:0003735">
    <property type="term" value="F:structural constituent of ribosome"/>
    <property type="evidence" value="ECO:0007669"/>
    <property type="project" value="InterPro"/>
</dbReference>
<dbReference type="GO" id="GO:0006412">
    <property type="term" value="P:translation"/>
    <property type="evidence" value="ECO:0007669"/>
    <property type="project" value="UniProtKB-UniRule"/>
</dbReference>
<dbReference type="Gene3D" id="1.10.1620.10">
    <property type="entry name" value="Ribosomal protein L39e"/>
    <property type="match status" value="1"/>
</dbReference>
<dbReference type="HAMAP" id="MF_00629">
    <property type="entry name" value="Ribosomal_eL39"/>
    <property type="match status" value="1"/>
</dbReference>
<dbReference type="InterPro" id="IPR000077">
    <property type="entry name" value="Ribosomal_eL39"/>
</dbReference>
<dbReference type="InterPro" id="IPR020083">
    <property type="entry name" value="Ribosomal_eL39_CS"/>
</dbReference>
<dbReference type="InterPro" id="IPR023626">
    <property type="entry name" value="Ribosomal_eL39_dom_sf"/>
</dbReference>
<dbReference type="NCBIfam" id="NF002316">
    <property type="entry name" value="PRK01242.1"/>
    <property type="match status" value="1"/>
</dbReference>
<dbReference type="Pfam" id="PF00832">
    <property type="entry name" value="Ribosomal_L39"/>
    <property type="match status" value="1"/>
</dbReference>
<dbReference type="SUPFAM" id="SSF48662">
    <property type="entry name" value="Ribosomal protein L39e"/>
    <property type="match status" value="1"/>
</dbReference>
<dbReference type="PROSITE" id="PS00051">
    <property type="entry name" value="RIBOSOMAL_L39E"/>
    <property type="match status" value="1"/>
</dbReference>
<gene>
    <name evidence="1" type="primary">rpl39e</name>
    <name type="ordered locus">Pars_1792</name>
</gene>
<proteinExistence type="inferred from homology"/>
<sequence length="51" mass="5985">MARNKPLGKKLRLGAALKSNRNPPVWVVAKTKRRVTRSPTRRHWRRVKLKA</sequence>
<evidence type="ECO:0000255" key="1">
    <source>
        <dbReference type="HAMAP-Rule" id="MF_00629"/>
    </source>
</evidence>
<evidence type="ECO:0000256" key="2">
    <source>
        <dbReference type="SAM" id="MobiDB-lite"/>
    </source>
</evidence>
<evidence type="ECO:0000305" key="3"/>
<keyword id="KW-0687">Ribonucleoprotein</keyword>
<keyword id="KW-0689">Ribosomal protein</keyword>
<reference key="1">
    <citation type="submission" date="2007-04" db="EMBL/GenBank/DDBJ databases">
        <title>Complete sequence of Pyrobaculum arsenaticum DSM 13514.</title>
        <authorList>
            <consortium name="US DOE Joint Genome Institute"/>
            <person name="Copeland A."/>
            <person name="Lucas S."/>
            <person name="Lapidus A."/>
            <person name="Barry K."/>
            <person name="Glavina del Rio T."/>
            <person name="Dalin E."/>
            <person name="Tice H."/>
            <person name="Pitluck S."/>
            <person name="Chain P."/>
            <person name="Malfatti S."/>
            <person name="Shin M."/>
            <person name="Vergez L."/>
            <person name="Schmutz J."/>
            <person name="Larimer F."/>
            <person name="Land M."/>
            <person name="Hauser L."/>
            <person name="Kyrpides N."/>
            <person name="Mikhailova N."/>
            <person name="Cozen A.E."/>
            <person name="Fitz-Gibbon S.T."/>
            <person name="House C.H."/>
            <person name="Saltikov C."/>
            <person name="Lowe T.M."/>
            <person name="Richardson P."/>
        </authorList>
    </citation>
    <scope>NUCLEOTIDE SEQUENCE [LARGE SCALE GENOMIC DNA]</scope>
    <source>
        <strain>ATCC 700994 / DSM 13514 / JCM 11321 / PZ6</strain>
    </source>
</reference>
<comment type="similarity">
    <text evidence="1">Belongs to the eukaryotic ribosomal protein eL39 family.</text>
</comment>